<organism>
    <name type="scientific">Lentzea aerocolonigenes</name>
    <name type="common">Lechevalieria aerocolonigenes</name>
    <name type="synonym">Saccharothrix aerocolonigenes</name>
    <dbReference type="NCBI Taxonomy" id="68170"/>
    <lineage>
        <taxon>Bacteria</taxon>
        <taxon>Bacillati</taxon>
        <taxon>Actinomycetota</taxon>
        <taxon>Actinomycetes</taxon>
        <taxon>Pseudonocardiales</taxon>
        <taxon>Pseudonocardiaceae</taxon>
        <taxon>Lentzea</taxon>
    </lineage>
</organism>
<comment type="function">
    <text evidence="1 2">Catalyzes the NADH-dependent reduction of FAD to provide FADH2 for the halogenase RebH.</text>
</comment>
<comment type="catalytic activity">
    <reaction evidence="2">
        <text>reduced riboflavin + NADP(+) = riboflavin + NADPH + 2 H(+)</text>
        <dbReference type="Rhea" id="RHEA:19377"/>
        <dbReference type="ChEBI" id="CHEBI:15378"/>
        <dbReference type="ChEBI" id="CHEBI:17607"/>
        <dbReference type="ChEBI" id="CHEBI:57783"/>
        <dbReference type="ChEBI" id="CHEBI:57986"/>
        <dbReference type="ChEBI" id="CHEBI:58349"/>
        <dbReference type="EC" id="1.5.1.30"/>
    </reaction>
</comment>
<comment type="biophysicochemical properties">
    <kinetics>
        <KM evidence="2">0.7 uM for NADH (with FAD)</KM>
        <KM evidence="2">1.3 uM for NADH (with FMN)</KM>
        <text>kcat is 108 min(-1).</text>
    </kinetics>
</comment>
<comment type="similarity">
    <text evidence="3">Belongs to the non-flavoprotein flavin reductase family.</text>
</comment>
<reference key="1">
    <citation type="journal article" date="2002" name="Chem. Biol.">
        <title>The biosynthetic gene cluster for the antitumor rebeccamycin: characterization and generation of indolocarbazole derivatives.</title>
        <authorList>
            <person name="Sanchez C."/>
            <person name="Butovich I.A."/>
            <person name="Brana A.F."/>
            <person name="Rohr J."/>
            <person name="Mendez C."/>
            <person name="Salas J.A."/>
        </authorList>
    </citation>
    <scope>NUCLEOTIDE SEQUENCE [GENOMIC DNA]</scope>
    <scope>FUNCTION</scope>
    <source>
        <strain>ATCC 39243 / DSM 44217 / BCRC 13729 / KCTC 9384</strain>
    </source>
</reference>
<reference key="2">
    <citation type="journal article" date="2002" name="J. Antibiot.">
        <title>Cloning of the staurosporine biosynthetic gene cluster from Streptomyces sp. TP-A0274 and its heterologous expression in Streptomyces lividans.</title>
        <authorList>
            <person name="Onaka H."/>
            <person name="Taniguchi S."/>
            <person name="Igarashi Y."/>
            <person name="Furumai T."/>
        </authorList>
    </citation>
    <scope>NUCLEOTIDE SEQUENCE [GENOMIC DNA]</scope>
</reference>
<reference key="3">
    <citation type="submission" date="2002-08" db="EMBL/GenBank/DDBJ databases">
        <title>The Biosynthesis of Indolocarbazoles in a Heterologous E. coli Host.</title>
        <authorList>
            <person name="Hyun C.-G."/>
            <person name="Bililign T."/>
            <person name="Liao J."/>
            <person name="Thorson J.S."/>
        </authorList>
    </citation>
    <scope>NUCLEOTIDE SEQUENCE [GENOMIC DNA]</scope>
</reference>
<reference key="4">
    <citation type="journal article" date="2003" name="Biosci. Biotechnol. Biochem.">
        <title>Characterization of the biosynthetic gene cluster of rebeccamycin from Lechevalieria aerocolonigenes ATCC 39243.</title>
        <authorList>
            <person name="Onaka H."/>
            <person name="Taniguchi S."/>
            <person name="Igarashi Y."/>
            <person name="Furumai T."/>
        </authorList>
    </citation>
    <scope>NUCLEOTIDE SEQUENCE [GENOMIC DNA]</scope>
</reference>
<reference key="5">
    <citation type="journal article" date="2003" name="J. Antibiot.">
        <title>pTOYAMAcos, pTYM18, and pTYM19, actinomycete-Escherichia coli integrating vectors for heterologous gene expression.</title>
        <authorList>
            <person name="Onaka H."/>
            <person name="Taniguchi S."/>
            <person name="Ikeda H."/>
            <person name="Igarashi Y."/>
            <person name="Furumai T."/>
        </authorList>
    </citation>
    <scope>NUCLEOTIDE SEQUENCE [GENOMIC DNA]</scope>
</reference>
<reference key="6">
    <citation type="journal article" date="2005" name="J. Bacteriol.">
        <title>Molecular analysis of the rebeccamycin L-amino acid oxidase from Lechevalieria aerocolonigenes ATCC 39243.</title>
        <authorList>
            <person name="Nishizawa T."/>
            <person name="Aldrich C.C."/>
            <person name="Sherman D.H."/>
        </authorList>
    </citation>
    <scope>NUCLEOTIDE SEQUENCE [GENOMIC DNA]</scope>
</reference>
<reference key="7">
    <citation type="journal article" date="2006" name="Nihon Hosenkin Gakkaishi">
        <title>Biosynthesis of heterocyclic antibiotics in actinomycetes and an approach to synthesize the natural compounds.</title>
        <authorList>
            <person name="Onaka H."/>
        </authorList>
    </citation>
    <scope>NUCLEOTIDE SEQUENCE [GENOMIC DNA]</scope>
</reference>
<reference key="8">
    <citation type="journal article" date="2006" name="Tetrahedron Lett.">
        <title>Direct formation of chromopyrrolic acid from indole-3-pyruvic acid by StaD, a novel hemoprotein in indolocarbazole biosynthesis.</title>
        <authorList>
            <person name="Asamizu S."/>
            <person name="Kato Y."/>
            <person name="Igarashi Y."/>
            <person name="Furumai T."/>
            <person name="Onaka H."/>
        </authorList>
    </citation>
    <scope>NUCLEOTIDE SEQUENCE [GENOMIC DNA]</scope>
</reference>
<reference key="9">
    <citation type="journal article" date="2005" name="Proc. Natl. Acad. Sci. U.S.A.">
        <title>Robust in vitro activity of RebF and RebH, a two-component reductase/halogenase, generating 7-chlorotryptophan during rebeccamycin biosynthesis.</title>
        <authorList>
            <person name="Yeh E."/>
            <person name="Garneau S."/>
            <person name="Walsh C.T."/>
        </authorList>
    </citation>
    <scope>FUNCTION</scope>
    <scope>CATALYTIC ACTIVITY</scope>
    <scope>BIOPHYSICOCHEMICAL PROPERTIES</scope>
</reference>
<sequence length="170" mass="18435">MTIEFDRPGAHVTAADHRALMSLFPTGVAVITAIDEAGTPHGMTCTSLTSVTLDPPTLLVCLNRASGTLHAVRGGRFGVNLLHARGRRAAEVFSTAVQDRFGEVRWEHSDVTGMPWLAEDAHAFAGCVVRKSTVVGDHEIVLGEVHEVVREHDLPLLYGMREFAVWTPEG</sequence>
<gene>
    <name type="primary">rbmH</name>
    <name type="synonym">rebF</name>
</gene>
<name>REBF_LENAE</name>
<accession>Q8KI76</accession>
<feature type="chain" id="PRO_0000422335" description="Flavin reductase (NADPH)">
    <location>
        <begin position="1"/>
        <end position="170"/>
    </location>
</feature>
<protein>
    <recommendedName>
        <fullName>Flavin reductase (NADPH)</fullName>
        <ecNumber>1.5.1.30</ecNumber>
    </recommendedName>
    <alternativeName>
        <fullName>Flavin dependent oxidoreductase</fullName>
    </alternativeName>
    <alternativeName>
        <fullName>Flavin:NAD(P)H reductase</fullName>
    </alternativeName>
</protein>
<dbReference type="EC" id="1.5.1.30"/>
<dbReference type="EMBL" id="AF534707">
    <property type="protein sequence ID" value="AAN01214.1"/>
    <property type="molecule type" value="Genomic_DNA"/>
</dbReference>
<dbReference type="EMBL" id="AB090952">
    <property type="protein sequence ID" value="BAC10680.1"/>
    <property type="molecule type" value="Genomic_DNA"/>
</dbReference>
<dbReference type="EMBL" id="AB071405">
    <property type="protein sequence ID" value="BAC15756.1"/>
    <property type="molecule type" value="Genomic_DNA"/>
</dbReference>
<dbReference type="EMBL" id="AJ414559">
    <property type="protein sequence ID" value="CAC93720.1"/>
    <property type="molecule type" value="Genomic_DNA"/>
</dbReference>
<dbReference type="SMR" id="Q8KI76"/>
<dbReference type="BioCyc" id="MetaCyc:MONOMER-15091"/>
<dbReference type="GO" id="GO:0010181">
    <property type="term" value="F:FMN binding"/>
    <property type="evidence" value="ECO:0007669"/>
    <property type="project" value="InterPro"/>
</dbReference>
<dbReference type="GO" id="GO:0042602">
    <property type="term" value="F:riboflavin reductase (NADPH) activity"/>
    <property type="evidence" value="ECO:0000314"/>
    <property type="project" value="CACAO"/>
</dbReference>
<dbReference type="Gene3D" id="2.30.110.10">
    <property type="entry name" value="Electron Transport, Fmn-binding Protein, Chain A"/>
    <property type="match status" value="1"/>
</dbReference>
<dbReference type="InterPro" id="IPR002563">
    <property type="entry name" value="Flavin_Rdtase-like_dom"/>
</dbReference>
<dbReference type="InterPro" id="IPR050268">
    <property type="entry name" value="NADH-dep_flavin_reductase"/>
</dbReference>
<dbReference type="InterPro" id="IPR012349">
    <property type="entry name" value="Split_barrel_FMN-bd"/>
</dbReference>
<dbReference type="PANTHER" id="PTHR30466">
    <property type="entry name" value="FLAVIN REDUCTASE"/>
    <property type="match status" value="1"/>
</dbReference>
<dbReference type="PANTHER" id="PTHR30466:SF1">
    <property type="entry name" value="FMN REDUCTASE (NADH) RUTF"/>
    <property type="match status" value="1"/>
</dbReference>
<dbReference type="Pfam" id="PF01613">
    <property type="entry name" value="Flavin_Reduct"/>
    <property type="match status" value="1"/>
</dbReference>
<dbReference type="SMART" id="SM00903">
    <property type="entry name" value="Flavin_Reduct"/>
    <property type="match status" value="1"/>
</dbReference>
<dbReference type="SUPFAM" id="SSF50475">
    <property type="entry name" value="FMN-binding split barrel"/>
    <property type="match status" value="1"/>
</dbReference>
<proteinExistence type="evidence at protein level"/>
<evidence type="ECO:0000269" key="1">
    <source>
    </source>
</evidence>
<evidence type="ECO:0000269" key="2">
    <source>
    </source>
</evidence>
<evidence type="ECO:0000305" key="3"/>
<keyword id="KW-0521">NADP</keyword>
<keyword id="KW-0560">Oxidoreductase</keyword>